<dbReference type="EC" id="5.3.1.1" evidence="1"/>
<dbReference type="EMBL" id="AF083071">
    <property type="protein sequence ID" value="AAC62687.1"/>
    <property type="molecule type" value="Genomic_DNA"/>
</dbReference>
<dbReference type="EMBL" id="DP000238">
    <property type="protein sequence ID" value="ABK77801.1"/>
    <property type="status" value="ALT_INIT"/>
    <property type="molecule type" value="Genomic_DNA"/>
</dbReference>
<dbReference type="SMR" id="O74044"/>
<dbReference type="STRING" id="414004.CENSYa_1177"/>
<dbReference type="EnsemblBacteria" id="ABK77801">
    <property type="protein sequence ID" value="ABK77801"/>
    <property type="gene ID" value="CENSYa_1177"/>
</dbReference>
<dbReference type="KEGG" id="csy:CENSYa_1177"/>
<dbReference type="PATRIC" id="fig|414004.10.peg.1071"/>
<dbReference type="HOGENOM" id="CLU_104921_0_0_2"/>
<dbReference type="UniPathway" id="UPA00109">
    <property type="reaction ID" value="UER00189"/>
</dbReference>
<dbReference type="UniPathway" id="UPA00138"/>
<dbReference type="Proteomes" id="UP000000758">
    <property type="component" value="Chromosome"/>
</dbReference>
<dbReference type="GO" id="GO:0005737">
    <property type="term" value="C:cytoplasm"/>
    <property type="evidence" value="ECO:0007669"/>
    <property type="project" value="UniProtKB-SubCell"/>
</dbReference>
<dbReference type="GO" id="GO:0004807">
    <property type="term" value="F:triose-phosphate isomerase activity"/>
    <property type="evidence" value="ECO:0007669"/>
    <property type="project" value="UniProtKB-UniRule"/>
</dbReference>
<dbReference type="GO" id="GO:0006094">
    <property type="term" value="P:gluconeogenesis"/>
    <property type="evidence" value="ECO:0007669"/>
    <property type="project" value="UniProtKB-UniRule"/>
</dbReference>
<dbReference type="GO" id="GO:0006096">
    <property type="term" value="P:glycolytic process"/>
    <property type="evidence" value="ECO:0007669"/>
    <property type="project" value="UniProtKB-UniRule"/>
</dbReference>
<dbReference type="CDD" id="cd00311">
    <property type="entry name" value="TIM"/>
    <property type="match status" value="1"/>
</dbReference>
<dbReference type="Gene3D" id="3.20.20.70">
    <property type="entry name" value="Aldolase class I"/>
    <property type="match status" value="1"/>
</dbReference>
<dbReference type="HAMAP" id="MF_00147_A">
    <property type="entry name" value="TIM_A"/>
    <property type="match status" value="1"/>
</dbReference>
<dbReference type="InterPro" id="IPR013785">
    <property type="entry name" value="Aldolase_TIM"/>
</dbReference>
<dbReference type="InterPro" id="IPR035990">
    <property type="entry name" value="TIM_sf"/>
</dbReference>
<dbReference type="InterPro" id="IPR000652">
    <property type="entry name" value="Triosephosphate_isomerase"/>
</dbReference>
<dbReference type="InterPro" id="IPR022891">
    <property type="entry name" value="Triosephosphate_isomerase_arc"/>
</dbReference>
<dbReference type="NCBIfam" id="NF003302">
    <property type="entry name" value="PRK04302.1"/>
    <property type="match status" value="1"/>
</dbReference>
<dbReference type="Pfam" id="PF00121">
    <property type="entry name" value="TIM"/>
    <property type="match status" value="1"/>
</dbReference>
<dbReference type="SUPFAM" id="SSF51351">
    <property type="entry name" value="Triosephosphate isomerase (TIM)"/>
    <property type="match status" value="1"/>
</dbReference>
<dbReference type="PROSITE" id="PS51440">
    <property type="entry name" value="TIM_2"/>
    <property type="match status" value="1"/>
</dbReference>
<comment type="function">
    <text evidence="1">Involved in the gluconeogenesis. Catalyzes stereospecifically the conversion of dihydroxyacetone phosphate (DHAP) to D-glyceraldehyde-3-phosphate (G3P).</text>
</comment>
<comment type="catalytic activity">
    <reaction evidence="1">
        <text>D-glyceraldehyde 3-phosphate = dihydroxyacetone phosphate</text>
        <dbReference type="Rhea" id="RHEA:18585"/>
        <dbReference type="ChEBI" id="CHEBI:57642"/>
        <dbReference type="ChEBI" id="CHEBI:59776"/>
        <dbReference type="EC" id="5.3.1.1"/>
    </reaction>
</comment>
<comment type="pathway">
    <text evidence="1">Carbohydrate biosynthesis; gluconeogenesis.</text>
</comment>
<comment type="pathway">
    <text evidence="1">Carbohydrate degradation; glycolysis; D-glyceraldehyde 3-phosphate from glycerone phosphate: step 1/1.</text>
</comment>
<comment type="subunit">
    <text evidence="1">Homotetramer; dimer of dimers.</text>
</comment>
<comment type="subcellular location">
    <subcellularLocation>
        <location evidence="1">Cytoplasm</location>
    </subcellularLocation>
</comment>
<comment type="similarity">
    <text evidence="1">Belongs to the triosephosphate isomerase family.</text>
</comment>
<comment type="sequence caution" evidence="2">
    <conflict type="erroneous initiation">
        <sequence resource="EMBL-CDS" id="ABK77801"/>
    </conflict>
    <text>Truncated N-terminus.</text>
</comment>
<name>TPIS_CENSY</name>
<accession>O74044</accession>
<accession>A0RWT4</accession>
<organism>
    <name type="scientific">Cenarchaeum symbiosum (strain A)</name>
    <dbReference type="NCBI Taxonomy" id="414004"/>
    <lineage>
        <taxon>Archaea</taxon>
        <taxon>Nitrososphaerota</taxon>
        <taxon>Candidatus Cenarchaeales</taxon>
        <taxon>Candidatus Cenarchaeaceae</taxon>
        <taxon>Candidatus Cenarchaeum</taxon>
    </lineage>
</organism>
<feature type="chain" id="PRO_0000090329" description="Triosephosphate isomerase">
    <location>
        <begin position="1"/>
        <end position="222"/>
    </location>
</feature>
<feature type="active site" description="Electrophile" evidence="1">
    <location>
        <position position="93"/>
    </location>
</feature>
<feature type="active site" description="Proton acceptor" evidence="1">
    <location>
        <position position="141"/>
    </location>
</feature>
<feature type="binding site" evidence="1">
    <location>
        <begin position="10"/>
        <end position="12"/>
    </location>
    <ligand>
        <name>substrate</name>
    </ligand>
</feature>
<feature type="binding site" evidence="1">
    <location>
        <position position="146"/>
    </location>
    <ligand>
        <name>substrate</name>
    </ligand>
</feature>
<feature type="binding site" evidence="1">
    <location>
        <position position="180"/>
    </location>
    <ligand>
        <name>substrate</name>
    </ligand>
</feature>
<feature type="binding site" evidence="1">
    <location>
        <begin position="201"/>
        <end position="202"/>
    </location>
    <ligand>
        <name>substrate</name>
    </ligand>
</feature>
<reference key="1">
    <citation type="journal article" date="1998" name="J. Bacteriol.">
        <title>Genomic analysis reveals chromosomal variation in natural populations of the uncultured psychrophilic archaeon Cenarchaeum symbiosum.</title>
        <authorList>
            <person name="Schleper C."/>
            <person name="Delong E.F."/>
            <person name="Preston C.M."/>
            <person name="Feldman R.A."/>
            <person name="Wu K.-Y."/>
            <person name="Swanson R.V."/>
        </authorList>
    </citation>
    <scope>NUCLEOTIDE SEQUENCE [GENOMIC DNA]</scope>
    <source>
        <strain>A</strain>
    </source>
</reference>
<reference key="2">
    <citation type="journal article" date="2006" name="Proc. Natl. Acad. Sci. U.S.A.">
        <title>Genomic analysis of the uncultivated marine crenarchaeote Cenarchaeum symbiosum.</title>
        <authorList>
            <person name="Hallam S.J."/>
            <person name="Konstantinidis K.T."/>
            <person name="Putnam N."/>
            <person name="Schleper C."/>
            <person name="Watanabe Y."/>
            <person name="Sugahara J."/>
            <person name="Preston C."/>
            <person name="de la Torre J."/>
            <person name="Richardson P.M."/>
            <person name="DeLong E.F."/>
        </authorList>
    </citation>
    <scope>NUCLEOTIDE SEQUENCE [LARGE SCALE GENOMIC DNA]</scope>
    <source>
        <strain>A</strain>
    </source>
</reference>
<gene>
    <name evidence="1" type="primary">tpiA</name>
    <name type="ordered locus">CENSYa_1177</name>
</gene>
<evidence type="ECO:0000255" key="1">
    <source>
        <dbReference type="HAMAP-Rule" id="MF_00147"/>
    </source>
</evidence>
<evidence type="ECO:0000305" key="2"/>
<sequence>MARSPVLIINCKNYKEAAGGRIDSLAAAAAGAAAKYGVRIALAPPQHLLGAVKGEDLTVLAQHIDDKGVGSTTGYVVPELLGESGVSGALINHSEHRVSADQVASLVPRLRGLDMISVVCVKDSAEAANLSRHRPDYIAIEPPELIGSGRSVSSERPELIGEAAEAIRGADGTKLLCGAGITSGADVRKALELGSKGILVASGVVKSSDPAAAIAELAQAMS</sequence>
<proteinExistence type="inferred from homology"/>
<protein>
    <recommendedName>
        <fullName evidence="1">Triosephosphate isomerase</fullName>
        <shortName evidence="1">TIM</shortName>
        <shortName evidence="1">TPI</shortName>
        <ecNumber evidence="1">5.3.1.1</ecNumber>
    </recommendedName>
    <alternativeName>
        <fullName evidence="1">Triose-phosphate isomerase</fullName>
    </alternativeName>
</protein>
<keyword id="KW-0963">Cytoplasm</keyword>
<keyword id="KW-0312">Gluconeogenesis</keyword>
<keyword id="KW-0324">Glycolysis</keyword>
<keyword id="KW-0413">Isomerase</keyword>
<keyword id="KW-1185">Reference proteome</keyword>